<accession>B7LWM9</accession>
<evidence type="ECO:0000255" key="1">
    <source>
        <dbReference type="HAMAP-Rule" id="MF_01050"/>
    </source>
</evidence>
<dbReference type="EC" id="2.8.3.21" evidence="1"/>
<dbReference type="EMBL" id="CU928158">
    <property type="protein sequence ID" value="CAQ87632.1"/>
    <property type="molecule type" value="Genomic_DNA"/>
</dbReference>
<dbReference type="RefSeq" id="WP_000349959.1">
    <property type="nucleotide sequence ID" value="NC_011740.1"/>
</dbReference>
<dbReference type="SMR" id="B7LWM9"/>
<dbReference type="GeneID" id="75058866"/>
<dbReference type="KEGG" id="efe:EFER_0046"/>
<dbReference type="HOGENOM" id="CLU_033975_2_0_6"/>
<dbReference type="OrthoDB" id="9058532at2"/>
<dbReference type="UniPathway" id="UPA00117"/>
<dbReference type="Proteomes" id="UP000000745">
    <property type="component" value="Chromosome"/>
</dbReference>
<dbReference type="GO" id="GO:0005737">
    <property type="term" value="C:cytoplasm"/>
    <property type="evidence" value="ECO:0007669"/>
    <property type="project" value="UniProtKB-SubCell"/>
</dbReference>
<dbReference type="GO" id="GO:0008735">
    <property type="term" value="F:L-carnitine CoA-transferase activity"/>
    <property type="evidence" value="ECO:0007669"/>
    <property type="project" value="RHEA"/>
</dbReference>
<dbReference type="GO" id="GO:0009437">
    <property type="term" value="P:carnitine metabolic process"/>
    <property type="evidence" value="ECO:0007669"/>
    <property type="project" value="UniProtKB-UniRule"/>
</dbReference>
<dbReference type="FunFam" id="3.30.1540.10:FF:000001">
    <property type="entry name" value="L-carnitine CoA-transferase"/>
    <property type="match status" value="1"/>
</dbReference>
<dbReference type="Gene3D" id="3.40.50.10540">
    <property type="entry name" value="Crotonobetainyl-coa:carnitine coa-transferase, domain 1"/>
    <property type="match status" value="1"/>
</dbReference>
<dbReference type="Gene3D" id="3.30.1540.10">
    <property type="entry name" value="formyl-coa transferase, domain 3"/>
    <property type="match status" value="1"/>
</dbReference>
<dbReference type="HAMAP" id="MF_01050">
    <property type="entry name" value="CaiB"/>
    <property type="match status" value="1"/>
</dbReference>
<dbReference type="InterPro" id="IPR050509">
    <property type="entry name" value="CoA-transferase_III"/>
</dbReference>
<dbReference type="InterPro" id="IPR023452">
    <property type="entry name" value="CoA-Trfase_CaiB"/>
</dbReference>
<dbReference type="InterPro" id="IPR003673">
    <property type="entry name" value="CoA-Trfase_fam_III"/>
</dbReference>
<dbReference type="InterPro" id="IPR044855">
    <property type="entry name" value="CoA-Trfase_III_dom3_sf"/>
</dbReference>
<dbReference type="InterPro" id="IPR023606">
    <property type="entry name" value="CoA-Trfase_III_dom_1_sf"/>
</dbReference>
<dbReference type="NCBIfam" id="NF002914">
    <property type="entry name" value="PRK03525.1"/>
    <property type="match status" value="1"/>
</dbReference>
<dbReference type="PANTHER" id="PTHR48228:SF6">
    <property type="entry name" value="L-CARNITINE COA-TRANSFERASE"/>
    <property type="match status" value="1"/>
</dbReference>
<dbReference type="PANTHER" id="PTHR48228">
    <property type="entry name" value="SUCCINYL-COA--D-CITRAMALATE COA-TRANSFERASE"/>
    <property type="match status" value="1"/>
</dbReference>
<dbReference type="Pfam" id="PF02515">
    <property type="entry name" value="CoA_transf_3"/>
    <property type="match status" value="1"/>
</dbReference>
<dbReference type="SUPFAM" id="SSF89796">
    <property type="entry name" value="CoA-transferase family III (CaiB/BaiF)"/>
    <property type="match status" value="1"/>
</dbReference>
<gene>
    <name evidence="1" type="primary">caiB</name>
    <name type="ordered locus">EFER_0046</name>
</gene>
<keyword id="KW-0963">Cytoplasm</keyword>
<keyword id="KW-0808">Transferase</keyword>
<sequence>MDHLPMPKFGPLAGLRVVFSGIEIAGPFAGQMFAEWGAEVIWIENVAWADTIRVQPNYPQLSRRNLHALSLNIFKDEGREAFLKLMETTDIFIEASKGPAFARRGITDEVLWQHNPKLVIAHLSGFGQYGTEEYTNLPAYNTIAQAFSGYLIQNGDVDQPMPAFPYTADYFSGLTATTAALAALHKVRETSKGESIDIAMYEVMLRMGQYFMMDYFNGGEMCPRMTKGKDPYYAGCGLYKCADGYIVMELVGITQIAECFKDIGLAHLLGTPEIPEGTQLIHRIECSYGPLVEEKLDAWLAAHTIAEVKERFAELNIACAKVLTVPELESNPQYVARESITQWQTMDGRTCKGPNVMPKFKNNPGQIWRGMPSHGMDTAAILKNIGYSENDIQELVSKGLAKVED</sequence>
<feature type="chain" id="PRO_1000136253" description="L-carnitine CoA-transferase">
    <location>
        <begin position="1"/>
        <end position="405"/>
    </location>
</feature>
<feature type="active site" description="Nucleophile" evidence="1">
    <location>
        <position position="169"/>
    </location>
</feature>
<feature type="binding site" evidence="1">
    <location>
        <position position="97"/>
    </location>
    <ligand>
        <name>CoA</name>
        <dbReference type="ChEBI" id="CHEBI:57287"/>
    </ligand>
</feature>
<feature type="binding site" evidence="1">
    <location>
        <position position="104"/>
    </location>
    <ligand>
        <name>CoA</name>
        <dbReference type="ChEBI" id="CHEBI:57287"/>
    </ligand>
</feature>
<comment type="function">
    <text evidence="1">Catalyzes the reversible transfer of the CoA moiety from gamma-butyrobetainyl-CoA to L-carnitine to generate L-carnitinyl-CoA and gamma-butyrobetaine. Is also able to catalyze the reversible transfer of the CoA moiety from gamma-butyrobetainyl-CoA or L-carnitinyl-CoA to crotonobetaine to generate crotonobetainyl-CoA.</text>
</comment>
<comment type="catalytic activity">
    <reaction evidence="1">
        <text>crotonobetainyl-CoA + (R)-carnitine = crotonobetaine + (R)-carnitinyl-CoA</text>
        <dbReference type="Rhea" id="RHEA:28526"/>
        <dbReference type="ChEBI" id="CHEBI:16347"/>
        <dbReference type="ChEBI" id="CHEBI:17237"/>
        <dbReference type="ChEBI" id="CHEBI:60932"/>
        <dbReference type="ChEBI" id="CHEBI:60933"/>
        <dbReference type="EC" id="2.8.3.21"/>
    </reaction>
</comment>
<comment type="catalytic activity">
    <reaction evidence="1">
        <text>4-(trimethylamino)butanoyl-CoA + (R)-carnitine = (R)-carnitinyl-CoA + 4-(trimethylamino)butanoate</text>
        <dbReference type="Rhea" id="RHEA:28418"/>
        <dbReference type="ChEBI" id="CHEBI:16244"/>
        <dbReference type="ChEBI" id="CHEBI:16347"/>
        <dbReference type="ChEBI" id="CHEBI:60932"/>
        <dbReference type="ChEBI" id="CHEBI:61513"/>
        <dbReference type="EC" id="2.8.3.21"/>
    </reaction>
</comment>
<comment type="pathway">
    <text evidence="1">Amine and polyamine metabolism; carnitine metabolism.</text>
</comment>
<comment type="subunit">
    <text evidence="1">Homodimer.</text>
</comment>
<comment type="subcellular location">
    <subcellularLocation>
        <location evidence="1">Cytoplasm</location>
    </subcellularLocation>
</comment>
<comment type="similarity">
    <text evidence="1">Belongs to the CoA-transferase III family. CaiB subfamily.</text>
</comment>
<reference key="1">
    <citation type="journal article" date="2009" name="PLoS Genet.">
        <title>Organised genome dynamics in the Escherichia coli species results in highly diverse adaptive paths.</title>
        <authorList>
            <person name="Touchon M."/>
            <person name="Hoede C."/>
            <person name="Tenaillon O."/>
            <person name="Barbe V."/>
            <person name="Baeriswyl S."/>
            <person name="Bidet P."/>
            <person name="Bingen E."/>
            <person name="Bonacorsi S."/>
            <person name="Bouchier C."/>
            <person name="Bouvet O."/>
            <person name="Calteau A."/>
            <person name="Chiapello H."/>
            <person name="Clermont O."/>
            <person name="Cruveiller S."/>
            <person name="Danchin A."/>
            <person name="Diard M."/>
            <person name="Dossat C."/>
            <person name="Karoui M.E."/>
            <person name="Frapy E."/>
            <person name="Garry L."/>
            <person name="Ghigo J.M."/>
            <person name="Gilles A.M."/>
            <person name="Johnson J."/>
            <person name="Le Bouguenec C."/>
            <person name="Lescat M."/>
            <person name="Mangenot S."/>
            <person name="Martinez-Jehanne V."/>
            <person name="Matic I."/>
            <person name="Nassif X."/>
            <person name="Oztas S."/>
            <person name="Petit M.A."/>
            <person name="Pichon C."/>
            <person name="Rouy Z."/>
            <person name="Ruf C.S."/>
            <person name="Schneider D."/>
            <person name="Tourret J."/>
            <person name="Vacherie B."/>
            <person name="Vallenet D."/>
            <person name="Medigue C."/>
            <person name="Rocha E.P.C."/>
            <person name="Denamur E."/>
        </authorList>
    </citation>
    <scope>NUCLEOTIDE SEQUENCE [LARGE SCALE GENOMIC DNA]</scope>
    <source>
        <strain>ATCC 35469 / DSM 13698 / BCRC 15582 / CCUG 18766 / IAM 14443 / JCM 21226 / LMG 7866 / NBRC 102419 / NCTC 12128 / CDC 0568-73</strain>
    </source>
</reference>
<protein>
    <recommendedName>
        <fullName evidence="1">L-carnitine CoA-transferase</fullName>
        <ecNumber evidence="1">2.8.3.21</ecNumber>
    </recommendedName>
    <alternativeName>
        <fullName evidence="1">Crotonobetainyl-CoA:carnitine CoA-transferase</fullName>
    </alternativeName>
</protein>
<name>CAIB_ESCF3</name>
<proteinExistence type="inferred from homology"/>
<organism>
    <name type="scientific">Escherichia fergusonii (strain ATCC 35469 / DSM 13698 / CCUG 18766 / IAM 14443 / JCM 21226 / LMG 7866 / NBRC 102419 / NCTC 12128 / CDC 0568-73)</name>
    <dbReference type="NCBI Taxonomy" id="585054"/>
    <lineage>
        <taxon>Bacteria</taxon>
        <taxon>Pseudomonadati</taxon>
        <taxon>Pseudomonadota</taxon>
        <taxon>Gammaproteobacteria</taxon>
        <taxon>Enterobacterales</taxon>
        <taxon>Enterobacteriaceae</taxon>
        <taxon>Escherichia</taxon>
    </lineage>
</organism>